<feature type="chain" id="PRO_1000000404" description="Argininosuccinate synthase">
    <location>
        <begin position="1"/>
        <end position="404"/>
    </location>
</feature>
<feature type="binding site" evidence="1">
    <location>
        <begin position="9"/>
        <end position="17"/>
    </location>
    <ligand>
        <name>ATP</name>
        <dbReference type="ChEBI" id="CHEBI:30616"/>
    </ligand>
</feature>
<feature type="binding site" evidence="1">
    <location>
        <position position="86"/>
    </location>
    <ligand>
        <name>L-citrulline</name>
        <dbReference type="ChEBI" id="CHEBI:57743"/>
    </ligand>
</feature>
<feature type="binding site" evidence="1">
    <location>
        <position position="116"/>
    </location>
    <ligand>
        <name>ATP</name>
        <dbReference type="ChEBI" id="CHEBI:30616"/>
    </ligand>
</feature>
<feature type="binding site" evidence="1">
    <location>
        <position position="118"/>
    </location>
    <ligand>
        <name>L-aspartate</name>
        <dbReference type="ChEBI" id="CHEBI:29991"/>
    </ligand>
</feature>
<feature type="binding site" evidence="1">
    <location>
        <position position="122"/>
    </location>
    <ligand>
        <name>L-aspartate</name>
        <dbReference type="ChEBI" id="CHEBI:29991"/>
    </ligand>
</feature>
<feature type="binding site" evidence="1">
    <location>
        <position position="122"/>
    </location>
    <ligand>
        <name>L-citrulline</name>
        <dbReference type="ChEBI" id="CHEBI:57743"/>
    </ligand>
</feature>
<feature type="binding site" evidence="1">
    <location>
        <position position="123"/>
    </location>
    <ligand>
        <name>L-aspartate</name>
        <dbReference type="ChEBI" id="CHEBI:29991"/>
    </ligand>
</feature>
<feature type="binding site" evidence="1">
    <location>
        <position position="126"/>
    </location>
    <ligand>
        <name>L-citrulline</name>
        <dbReference type="ChEBI" id="CHEBI:57743"/>
    </ligand>
</feature>
<feature type="binding site" evidence="1">
    <location>
        <position position="174"/>
    </location>
    <ligand>
        <name>L-citrulline</name>
        <dbReference type="ChEBI" id="CHEBI:57743"/>
    </ligand>
</feature>
<feature type="binding site" evidence="1">
    <location>
        <position position="183"/>
    </location>
    <ligand>
        <name>L-citrulline</name>
        <dbReference type="ChEBI" id="CHEBI:57743"/>
    </ligand>
</feature>
<feature type="binding site" evidence="1">
    <location>
        <position position="259"/>
    </location>
    <ligand>
        <name>L-citrulline</name>
        <dbReference type="ChEBI" id="CHEBI:57743"/>
    </ligand>
</feature>
<feature type="binding site" evidence="1">
    <location>
        <position position="271"/>
    </location>
    <ligand>
        <name>L-citrulline</name>
        <dbReference type="ChEBI" id="CHEBI:57743"/>
    </ligand>
</feature>
<accession>A0AKJ7</accession>
<keyword id="KW-0028">Amino-acid biosynthesis</keyword>
<keyword id="KW-0055">Arginine biosynthesis</keyword>
<keyword id="KW-0067">ATP-binding</keyword>
<keyword id="KW-0963">Cytoplasm</keyword>
<keyword id="KW-0436">Ligase</keyword>
<keyword id="KW-0547">Nucleotide-binding</keyword>
<evidence type="ECO:0000255" key="1">
    <source>
        <dbReference type="HAMAP-Rule" id="MF_00005"/>
    </source>
</evidence>
<reference key="1">
    <citation type="journal article" date="2006" name="J. Bacteriol.">
        <title>Whole-genome sequence of Listeria welshimeri reveals common steps in genome reduction with Listeria innocua as compared to Listeria monocytogenes.</title>
        <authorList>
            <person name="Hain T."/>
            <person name="Steinweg C."/>
            <person name="Kuenne C.T."/>
            <person name="Billion A."/>
            <person name="Ghai R."/>
            <person name="Chatterjee S.S."/>
            <person name="Domann E."/>
            <person name="Kaerst U."/>
            <person name="Goesmann A."/>
            <person name="Bekel T."/>
            <person name="Bartels D."/>
            <person name="Kaiser O."/>
            <person name="Meyer F."/>
            <person name="Puehler A."/>
            <person name="Weisshaar B."/>
            <person name="Wehland J."/>
            <person name="Liang C."/>
            <person name="Dandekar T."/>
            <person name="Lampidis R."/>
            <person name="Kreft J."/>
            <person name="Goebel W."/>
            <person name="Chakraborty T."/>
        </authorList>
    </citation>
    <scope>NUCLEOTIDE SEQUENCE [LARGE SCALE GENOMIC DNA]</scope>
    <source>
        <strain>ATCC 35897 / DSM 20650 / CCUG 15529 / CIP 8149 / NCTC 11857 / SLCC 5334 / V8</strain>
    </source>
</reference>
<proteinExistence type="inferred from homology"/>
<name>ASSY_LISW6</name>
<sequence length="404" mass="44523">MTKEKIVLAYSGGLDTSVAIQWLVESGYEVIACCLDVGEGKNLDFIKEKAITVGASESYTIDAKEEFAEDFALIALQAHAYYEGKYPLISALSRPLIAKKLVEVARQEGASAIAHGCTGKGNDQVRFEVAIHALAPDLKVISPVRDWKWSREEEINYAKEHNIPVPIDLDNPFSIDQNLWGRSNECGVLENPWTTPPEAAYDLTVSLEDAPDTADIVEITFDAGIPISLNGENMSLANLILTLNEIAGKHGVGRIDHIENRLVGIKSREVYECPAAVTLIKAHKELEDLTFVREVAHFKPIIEQKISETIYNGLWFSPLTEALVAFLKSTQKFVNGTIRVKLFKGHAIVEGRKSPNSLYDENLATYTSSDTFDQDAAVGFIKLWGLPTKVSAEVNSKVTITTEV</sequence>
<protein>
    <recommendedName>
        <fullName evidence="1">Argininosuccinate synthase</fullName>
        <ecNumber evidence="1">6.3.4.5</ecNumber>
    </recommendedName>
    <alternativeName>
        <fullName evidence="1">Citrulline--aspartate ligase</fullName>
    </alternativeName>
</protein>
<gene>
    <name evidence="1" type="primary">argG</name>
    <name type="ordered locus">lwe2111</name>
</gene>
<organism>
    <name type="scientific">Listeria welshimeri serovar 6b (strain ATCC 35897 / DSM 20650 / CCUG 15529 / CIP 8149 / NCTC 11857 / SLCC 5334 / V8)</name>
    <dbReference type="NCBI Taxonomy" id="386043"/>
    <lineage>
        <taxon>Bacteria</taxon>
        <taxon>Bacillati</taxon>
        <taxon>Bacillota</taxon>
        <taxon>Bacilli</taxon>
        <taxon>Bacillales</taxon>
        <taxon>Listeriaceae</taxon>
        <taxon>Listeria</taxon>
    </lineage>
</organism>
<comment type="catalytic activity">
    <reaction evidence="1">
        <text>L-citrulline + L-aspartate + ATP = 2-(N(omega)-L-arginino)succinate + AMP + diphosphate + H(+)</text>
        <dbReference type="Rhea" id="RHEA:10932"/>
        <dbReference type="ChEBI" id="CHEBI:15378"/>
        <dbReference type="ChEBI" id="CHEBI:29991"/>
        <dbReference type="ChEBI" id="CHEBI:30616"/>
        <dbReference type="ChEBI" id="CHEBI:33019"/>
        <dbReference type="ChEBI" id="CHEBI:57472"/>
        <dbReference type="ChEBI" id="CHEBI:57743"/>
        <dbReference type="ChEBI" id="CHEBI:456215"/>
        <dbReference type="EC" id="6.3.4.5"/>
    </reaction>
</comment>
<comment type="pathway">
    <text evidence="1">Amino-acid biosynthesis; L-arginine biosynthesis; L-arginine from L-ornithine and carbamoyl phosphate: step 2/3.</text>
</comment>
<comment type="subunit">
    <text evidence="1">Homotetramer.</text>
</comment>
<comment type="subcellular location">
    <subcellularLocation>
        <location evidence="1">Cytoplasm</location>
    </subcellularLocation>
</comment>
<comment type="similarity">
    <text evidence="1">Belongs to the argininosuccinate synthase family. Type 1 subfamily.</text>
</comment>
<dbReference type="EC" id="6.3.4.5" evidence="1"/>
<dbReference type="EMBL" id="AM263198">
    <property type="protein sequence ID" value="CAK21529.1"/>
    <property type="molecule type" value="Genomic_DNA"/>
</dbReference>
<dbReference type="RefSeq" id="WP_011702869.1">
    <property type="nucleotide sequence ID" value="NC_008555.1"/>
</dbReference>
<dbReference type="SMR" id="A0AKJ7"/>
<dbReference type="STRING" id="386043.lwe2111"/>
<dbReference type="GeneID" id="61190011"/>
<dbReference type="KEGG" id="lwe:lwe2111"/>
<dbReference type="eggNOG" id="COG0137">
    <property type="taxonomic scope" value="Bacteria"/>
</dbReference>
<dbReference type="HOGENOM" id="CLU_032784_4_2_9"/>
<dbReference type="OrthoDB" id="9801641at2"/>
<dbReference type="UniPathway" id="UPA00068">
    <property type="reaction ID" value="UER00113"/>
</dbReference>
<dbReference type="Proteomes" id="UP000000779">
    <property type="component" value="Chromosome"/>
</dbReference>
<dbReference type="GO" id="GO:0005737">
    <property type="term" value="C:cytoplasm"/>
    <property type="evidence" value="ECO:0007669"/>
    <property type="project" value="UniProtKB-SubCell"/>
</dbReference>
<dbReference type="GO" id="GO:0004055">
    <property type="term" value="F:argininosuccinate synthase activity"/>
    <property type="evidence" value="ECO:0007669"/>
    <property type="project" value="UniProtKB-UniRule"/>
</dbReference>
<dbReference type="GO" id="GO:0005524">
    <property type="term" value="F:ATP binding"/>
    <property type="evidence" value="ECO:0007669"/>
    <property type="project" value="UniProtKB-UniRule"/>
</dbReference>
<dbReference type="GO" id="GO:0000053">
    <property type="term" value="P:argininosuccinate metabolic process"/>
    <property type="evidence" value="ECO:0007669"/>
    <property type="project" value="TreeGrafter"/>
</dbReference>
<dbReference type="GO" id="GO:0006526">
    <property type="term" value="P:L-arginine biosynthetic process"/>
    <property type="evidence" value="ECO:0007669"/>
    <property type="project" value="UniProtKB-UniRule"/>
</dbReference>
<dbReference type="GO" id="GO:0000050">
    <property type="term" value="P:urea cycle"/>
    <property type="evidence" value="ECO:0007669"/>
    <property type="project" value="TreeGrafter"/>
</dbReference>
<dbReference type="CDD" id="cd01999">
    <property type="entry name" value="ASS"/>
    <property type="match status" value="1"/>
</dbReference>
<dbReference type="FunFam" id="1.20.5.470:FF:000002">
    <property type="entry name" value="Argininosuccinate synthase"/>
    <property type="match status" value="1"/>
</dbReference>
<dbReference type="FunFam" id="3.40.50.620:FF:000038">
    <property type="entry name" value="Argininosuccinate synthase"/>
    <property type="match status" value="1"/>
</dbReference>
<dbReference type="FunFam" id="3.90.1260.10:FF:000007">
    <property type="entry name" value="Argininosuccinate synthase"/>
    <property type="match status" value="1"/>
</dbReference>
<dbReference type="Gene3D" id="3.90.1260.10">
    <property type="entry name" value="Argininosuccinate synthetase, chain A, domain 2"/>
    <property type="match status" value="1"/>
</dbReference>
<dbReference type="Gene3D" id="3.40.50.620">
    <property type="entry name" value="HUPs"/>
    <property type="match status" value="1"/>
</dbReference>
<dbReference type="Gene3D" id="1.20.5.470">
    <property type="entry name" value="Single helix bin"/>
    <property type="match status" value="1"/>
</dbReference>
<dbReference type="HAMAP" id="MF_00005">
    <property type="entry name" value="Arg_succ_synth_type1"/>
    <property type="match status" value="1"/>
</dbReference>
<dbReference type="InterPro" id="IPR048268">
    <property type="entry name" value="Arginosuc_syn_C"/>
</dbReference>
<dbReference type="InterPro" id="IPR048267">
    <property type="entry name" value="Arginosuc_syn_N"/>
</dbReference>
<dbReference type="InterPro" id="IPR001518">
    <property type="entry name" value="Arginosuc_synth"/>
</dbReference>
<dbReference type="InterPro" id="IPR018223">
    <property type="entry name" value="Arginosuc_synth_CS"/>
</dbReference>
<dbReference type="InterPro" id="IPR023434">
    <property type="entry name" value="Arginosuc_synth_type_1_subfam"/>
</dbReference>
<dbReference type="InterPro" id="IPR024074">
    <property type="entry name" value="AS_cat/multimer_dom_body"/>
</dbReference>
<dbReference type="InterPro" id="IPR014729">
    <property type="entry name" value="Rossmann-like_a/b/a_fold"/>
</dbReference>
<dbReference type="NCBIfam" id="TIGR00032">
    <property type="entry name" value="argG"/>
    <property type="match status" value="1"/>
</dbReference>
<dbReference type="NCBIfam" id="NF001770">
    <property type="entry name" value="PRK00509.1"/>
    <property type="match status" value="1"/>
</dbReference>
<dbReference type="PANTHER" id="PTHR11587">
    <property type="entry name" value="ARGININOSUCCINATE SYNTHASE"/>
    <property type="match status" value="1"/>
</dbReference>
<dbReference type="PANTHER" id="PTHR11587:SF2">
    <property type="entry name" value="ARGININOSUCCINATE SYNTHASE"/>
    <property type="match status" value="1"/>
</dbReference>
<dbReference type="Pfam" id="PF20979">
    <property type="entry name" value="Arginosuc_syn_C"/>
    <property type="match status" value="1"/>
</dbReference>
<dbReference type="Pfam" id="PF00764">
    <property type="entry name" value="Arginosuc_synth"/>
    <property type="match status" value="1"/>
</dbReference>
<dbReference type="SUPFAM" id="SSF52402">
    <property type="entry name" value="Adenine nucleotide alpha hydrolases-like"/>
    <property type="match status" value="1"/>
</dbReference>
<dbReference type="SUPFAM" id="SSF69864">
    <property type="entry name" value="Argininosuccinate synthetase, C-terminal domain"/>
    <property type="match status" value="1"/>
</dbReference>
<dbReference type="PROSITE" id="PS00564">
    <property type="entry name" value="ARGININOSUCCIN_SYN_1"/>
    <property type="match status" value="1"/>
</dbReference>
<dbReference type="PROSITE" id="PS00565">
    <property type="entry name" value="ARGININOSUCCIN_SYN_2"/>
    <property type="match status" value="1"/>
</dbReference>